<keyword id="KW-0963">Cytoplasm</keyword>
<keyword id="KW-0671">Queuosine biosynthesis</keyword>
<keyword id="KW-0949">S-adenosyl-L-methionine</keyword>
<keyword id="KW-0808">Transferase</keyword>
<name>QUEA_CLOB1</name>
<feature type="chain" id="PRO_1000015198" description="S-adenosylmethionine:tRNA ribosyltransferase-isomerase">
    <location>
        <begin position="1"/>
        <end position="341"/>
    </location>
</feature>
<accession>A7FY18</accession>
<comment type="function">
    <text evidence="1">Transfers and isomerizes the ribose moiety from AdoMet to the 7-aminomethyl group of 7-deazaguanine (preQ1-tRNA) to give epoxyqueuosine (oQ-tRNA).</text>
</comment>
<comment type="catalytic activity">
    <reaction evidence="1">
        <text>7-aminomethyl-7-carbaguanosine(34) in tRNA + S-adenosyl-L-methionine = epoxyqueuosine(34) in tRNA + adenine + L-methionine + 2 H(+)</text>
        <dbReference type="Rhea" id="RHEA:32155"/>
        <dbReference type="Rhea" id="RHEA-COMP:10342"/>
        <dbReference type="Rhea" id="RHEA-COMP:18582"/>
        <dbReference type="ChEBI" id="CHEBI:15378"/>
        <dbReference type="ChEBI" id="CHEBI:16708"/>
        <dbReference type="ChEBI" id="CHEBI:57844"/>
        <dbReference type="ChEBI" id="CHEBI:59789"/>
        <dbReference type="ChEBI" id="CHEBI:82833"/>
        <dbReference type="ChEBI" id="CHEBI:194443"/>
        <dbReference type="EC" id="2.4.99.17"/>
    </reaction>
</comment>
<comment type="pathway">
    <text evidence="1">tRNA modification; tRNA-queuosine biosynthesis.</text>
</comment>
<comment type="subunit">
    <text evidence="1">Monomer.</text>
</comment>
<comment type="subcellular location">
    <subcellularLocation>
        <location evidence="1">Cytoplasm</location>
    </subcellularLocation>
</comment>
<comment type="similarity">
    <text evidence="1">Belongs to the QueA family.</text>
</comment>
<sequence>MKVKDFDFYLPEELIAQHPIEKRDEARLLVLDKETGEIEHKIFKDILDYLTPNDCLVLNNTRVLPARLIGAKEETGGKMEFLLLKRKEKDVWETLVKPGKRAQIGARFIFGNGELKAEVIGMGEEGSRIVKFYYEGIFEEILDQLGQMPLPPYIKEKLDDKEMYQTVYSKEEGSAAAPTAGLHFTEELLKKIEEKGVKLAFLTLHVGLGTFRPVKVEDIQEHVMHSEYYKMDKKTAEIINDTKENGGRVIAVGTTSCRTLETIGAIEGKVGEQSGWTDIFIYPGYKYKVVDALITNFHLPQSTLLMLVSALAGRDNIMNAYNVAVEKEYRFFSFGDAMFIK</sequence>
<protein>
    <recommendedName>
        <fullName evidence="1">S-adenosylmethionine:tRNA ribosyltransferase-isomerase</fullName>
        <ecNumber evidence="1">2.4.99.17</ecNumber>
    </recommendedName>
    <alternativeName>
        <fullName evidence="1">Queuosine biosynthesis protein QueA</fullName>
    </alternativeName>
</protein>
<proteinExistence type="inferred from homology"/>
<reference key="1">
    <citation type="journal article" date="2007" name="PLoS ONE">
        <title>Analysis of the neurotoxin complex genes in Clostridium botulinum A1-A4 and B1 strains: BoNT/A3, /Ba4 and /B1 clusters are located within plasmids.</title>
        <authorList>
            <person name="Smith T.J."/>
            <person name="Hill K.K."/>
            <person name="Foley B.T."/>
            <person name="Detter J.C."/>
            <person name="Munk A.C."/>
            <person name="Bruce D.C."/>
            <person name="Doggett N.A."/>
            <person name="Smith L.A."/>
            <person name="Marks J.D."/>
            <person name="Xie G."/>
            <person name="Brettin T.S."/>
        </authorList>
    </citation>
    <scope>NUCLEOTIDE SEQUENCE [LARGE SCALE GENOMIC DNA]</scope>
    <source>
        <strain>ATCC 19397 / Type A</strain>
    </source>
</reference>
<gene>
    <name evidence="1" type="primary">queA</name>
    <name type="ordered locus">CLB_3098</name>
</gene>
<dbReference type="EC" id="2.4.99.17" evidence="1"/>
<dbReference type="EMBL" id="CP000726">
    <property type="protein sequence ID" value="ABS33152.1"/>
    <property type="molecule type" value="Genomic_DNA"/>
</dbReference>
<dbReference type="RefSeq" id="WP_012048087.1">
    <property type="nucleotide sequence ID" value="NC_009697.1"/>
</dbReference>
<dbReference type="SMR" id="A7FY18"/>
<dbReference type="GeneID" id="5186431"/>
<dbReference type="KEGG" id="cba:CLB_3098"/>
<dbReference type="HOGENOM" id="CLU_039110_1_0_9"/>
<dbReference type="UniPathway" id="UPA00392"/>
<dbReference type="GO" id="GO:0005737">
    <property type="term" value="C:cytoplasm"/>
    <property type="evidence" value="ECO:0007669"/>
    <property type="project" value="UniProtKB-SubCell"/>
</dbReference>
<dbReference type="GO" id="GO:0051075">
    <property type="term" value="F:S-adenosylmethionine:tRNA ribosyltransferase-isomerase activity"/>
    <property type="evidence" value="ECO:0007669"/>
    <property type="project" value="UniProtKB-EC"/>
</dbReference>
<dbReference type="GO" id="GO:0008616">
    <property type="term" value="P:queuosine biosynthetic process"/>
    <property type="evidence" value="ECO:0007669"/>
    <property type="project" value="UniProtKB-UniRule"/>
</dbReference>
<dbReference type="GO" id="GO:0002099">
    <property type="term" value="P:tRNA wobble guanine modification"/>
    <property type="evidence" value="ECO:0007669"/>
    <property type="project" value="TreeGrafter"/>
</dbReference>
<dbReference type="FunFam" id="2.40.10.240:FF:000002">
    <property type="entry name" value="S-adenosylmethionine:tRNA ribosyltransferase-isomerase"/>
    <property type="match status" value="1"/>
</dbReference>
<dbReference type="FunFam" id="3.40.1780.10:FF:000001">
    <property type="entry name" value="S-adenosylmethionine:tRNA ribosyltransferase-isomerase"/>
    <property type="match status" value="1"/>
</dbReference>
<dbReference type="Gene3D" id="2.40.10.240">
    <property type="entry name" value="QueA-like"/>
    <property type="match status" value="1"/>
</dbReference>
<dbReference type="Gene3D" id="3.40.1780.10">
    <property type="entry name" value="QueA-like"/>
    <property type="match status" value="1"/>
</dbReference>
<dbReference type="HAMAP" id="MF_00113">
    <property type="entry name" value="QueA"/>
    <property type="match status" value="1"/>
</dbReference>
<dbReference type="InterPro" id="IPR003699">
    <property type="entry name" value="QueA"/>
</dbReference>
<dbReference type="InterPro" id="IPR042118">
    <property type="entry name" value="QueA_dom1"/>
</dbReference>
<dbReference type="InterPro" id="IPR042119">
    <property type="entry name" value="QueA_dom2"/>
</dbReference>
<dbReference type="InterPro" id="IPR036100">
    <property type="entry name" value="QueA_sf"/>
</dbReference>
<dbReference type="NCBIfam" id="NF001140">
    <property type="entry name" value="PRK00147.1"/>
    <property type="match status" value="1"/>
</dbReference>
<dbReference type="NCBIfam" id="TIGR00113">
    <property type="entry name" value="queA"/>
    <property type="match status" value="1"/>
</dbReference>
<dbReference type="PANTHER" id="PTHR30307">
    <property type="entry name" value="S-ADENOSYLMETHIONINE:TRNA RIBOSYLTRANSFERASE-ISOMERASE"/>
    <property type="match status" value="1"/>
</dbReference>
<dbReference type="PANTHER" id="PTHR30307:SF0">
    <property type="entry name" value="S-ADENOSYLMETHIONINE:TRNA RIBOSYLTRANSFERASE-ISOMERASE"/>
    <property type="match status" value="1"/>
</dbReference>
<dbReference type="Pfam" id="PF02547">
    <property type="entry name" value="Queuosine_synth"/>
    <property type="match status" value="1"/>
</dbReference>
<dbReference type="SUPFAM" id="SSF111337">
    <property type="entry name" value="QueA-like"/>
    <property type="match status" value="1"/>
</dbReference>
<evidence type="ECO:0000255" key="1">
    <source>
        <dbReference type="HAMAP-Rule" id="MF_00113"/>
    </source>
</evidence>
<organism>
    <name type="scientific">Clostridium botulinum (strain ATCC 19397 / Type A)</name>
    <dbReference type="NCBI Taxonomy" id="441770"/>
    <lineage>
        <taxon>Bacteria</taxon>
        <taxon>Bacillati</taxon>
        <taxon>Bacillota</taxon>
        <taxon>Clostridia</taxon>
        <taxon>Eubacteriales</taxon>
        <taxon>Clostridiaceae</taxon>
        <taxon>Clostridium</taxon>
    </lineage>
</organism>